<comment type="function">
    <text evidence="1">Component of the SOSS complex, a multiprotein complex that functions downstream of the MRN complex to promote DNA repair and G2/M checkpoint. In the SOSS complex, acts as a sensor of single-stranded DNA that binds to single-stranded DNA. The SOSS complex associates with DNA lesions and influences diverse endpoints in the cellular DNA damage response including cell-cycle checkpoint activation, recombinational repair and maintenance of genomic stability. Required for efficient homologous recombination-dependent repair of double-strand breaks (DSBs) (By similarity).</text>
</comment>
<comment type="subunit">
    <text evidence="1">Component of the SOSS complex, composed of soss-b (soss-b1/nabp2 or soss-b2/nabp1), soss-a/ints3 and soss-c/inip. SOSS complexes containing soss-b1/nabp2 are more abundant than complexes containing soss-b2/nabp1 (By similarity).</text>
</comment>
<comment type="subcellular location">
    <subcellularLocation>
        <location evidence="1">Nucleus</location>
    </subcellularLocation>
    <text evidence="1">Localizes to nuclear foci following DNA damage.</text>
</comment>
<comment type="similarity">
    <text evidence="3">Belongs to the SOSS-B family. SOSS-B2 subfamily.</text>
</comment>
<dbReference type="EMBL" id="BC086713">
    <property type="protein sequence ID" value="AAH86713.1"/>
    <property type="molecule type" value="mRNA"/>
</dbReference>
<dbReference type="RefSeq" id="NP_001008643.1">
    <property type="nucleotide sequence ID" value="NM_001008643.1"/>
</dbReference>
<dbReference type="SMR" id="Q5PRC7"/>
<dbReference type="FunCoup" id="Q5PRC7">
    <property type="interactions" value="732"/>
</dbReference>
<dbReference type="STRING" id="7955.ENSDARP00000123018"/>
<dbReference type="PaxDb" id="7955-ENSDARP00000005126"/>
<dbReference type="GeneID" id="494100"/>
<dbReference type="KEGG" id="dre:494100"/>
<dbReference type="AGR" id="ZFIN:ZDB-GENE-041212-71"/>
<dbReference type="CTD" id="494100"/>
<dbReference type="ZFIN" id="ZDB-GENE-041212-71">
    <property type="gene designation" value="nabp1a"/>
</dbReference>
<dbReference type="eggNOG" id="KOG3416">
    <property type="taxonomic scope" value="Eukaryota"/>
</dbReference>
<dbReference type="InParanoid" id="Q5PRC7"/>
<dbReference type="OrthoDB" id="295715at2759"/>
<dbReference type="PhylomeDB" id="Q5PRC7"/>
<dbReference type="Reactome" id="R-DRE-6807505">
    <property type="pathway name" value="RNA polymerase II transcribes snRNA genes"/>
</dbReference>
<dbReference type="PRO" id="PR:Q5PRC7"/>
<dbReference type="Proteomes" id="UP000000437">
    <property type="component" value="Alternate scaffold 9"/>
</dbReference>
<dbReference type="Proteomes" id="UP000000437">
    <property type="component" value="Chromosome 9"/>
</dbReference>
<dbReference type="GO" id="GO:0005634">
    <property type="term" value="C:nucleus"/>
    <property type="evidence" value="ECO:0000250"/>
    <property type="project" value="UniProtKB"/>
</dbReference>
<dbReference type="GO" id="GO:0070876">
    <property type="term" value="C:SOSS complex"/>
    <property type="evidence" value="ECO:0000250"/>
    <property type="project" value="UniProtKB"/>
</dbReference>
<dbReference type="GO" id="GO:0003677">
    <property type="term" value="F:DNA binding"/>
    <property type="evidence" value="ECO:0000318"/>
    <property type="project" value="GO_Central"/>
</dbReference>
<dbReference type="GO" id="GO:0003697">
    <property type="term" value="F:single-stranded DNA binding"/>
    <property type="evidence" value="ECO:0000250"/>
    <property type="project" value="UniProtKB"/>
</dbReference>
<dbReference type="GO" id="GO:0006974">
    <property type="term" value="P:DNA damage response"/>
    <property type="evidence" value="ECO:0000250"/>
    <property type="project" value="UniProtKB"/>
</dbReference>
<dbReference type="GO" id="GO:0006281">
    <property type="term" value="P:DNA repair"/>
    <property type="evidence" value="ECO:0000250"/>
    <property type="project" value="UniProtKB"/>
</dbReference>
<dbReference type="GO" id="GO:0000724">
    <property type="term" value="P:double-strand break repair via homologous recombination"/>
    <property type="evidence" value="ECO:0000250"/>
    <property type="project" value="UniProtKB"/>
</dbReference>
<dbReference type="GO" id="GO:0044818">
    <property type="term" value="P:mitotic G2/M transition checkpoint"/>
    <property type="evidence" value="ECO:0000250"/>
    <property type="project" value="UniProtKB"/>
</dbReference>
<dbReference type="GO" id="GO:0010212">
    <property type="term" value="P:response to ionizing radiation"/>
    <property type="evidence" value="ECO:0000250"/>
    <property type="project" value="UniProtKB"/>
</dbReference>
<dbReference type="CDD" id="cd04491">
    <property type="entry name" value="SoSSB_OBF"/>
    <property type="match status" value="1"/>
</dbReference>
<dbReference type="FunFam" id="2.40.50.140:FF:000072">
    <property type="entry name" value="SOSS complex subunit B2"/>
    <property type="match status" value="1"/>
</dbReference>
<dbReference type="Gene3D" id="2.40.50.140">
    <property type="entry name" value="Nucleic acid-binding proteins"/>
    <property type="match status" value="1"/>
</dbReference>
<dbReference type="InterPro" id="IPR012340">
    <property type="entry name" value="NA-bd_OB-fold"/>
</dbReference>
<dbReference type="InterPro" id="IPR051231">
    <property type="entry name" value="SOSS-B"/>
</dbReference>
<dbReference type="PANTHER" id="PTHR13356">
    <property type="entry name" value="OB FOLD NUCLEIC ACID BINDING PROTEIN-RELATED"/>
    <property type="match status" value="1"/>
</dbReference>
<dbReference type="PANTHER" id="PTHR13356:SF5">
    <property type="entry name" value="SOSS COMPLEX SUBUNIT B2"/>
    <property type="match status" value="1"/>
</dbReference>
<dbReference type="SUPFAM" id="SSF50249">
    <property type="entry name" value="Nucleic acid-binding proteins"/>
    <property type="match status" value="1"/>
</dbReference>
<evidence type="ECO:0000250" key="1"/>
<evidence type="ECO:0000256" key="2">
    <source>
        <dbReference type="SAM" id="MobiDB-lite"/>
    </source>
</evidence>
<evidence type="ECO:0000305" key="3"/>
<reference key="1">
    <citation type="submission" date="2004-12" db="EMBL/GenBank/DDBJ databases">
        <authorList>
            <consortium name="NIH - Zebrafish Gene Collection (ZGC) project"/>
        </authorList>
    </citation>
    <scope>NUCLEOTIDE SEQUENCE [LARGE SCALE MRNA]</scope>
    <source>
        <tissue>Embryo</tissue>
    </source>
</reference>
<organism>
    <name type="scientific">Danio rerio</name>
    <name type="common">Zebrafish</name>
    <name type="synonym">Brachydanio rerio</name>
    <dbReference type="NCBI Taxonomy" id="7955"/>
    <lineage>
        <taxon>Eukaryota</taxon>
        <taxon>Metazoa</taxon>
        <taxon>Chordata</taxon>
        <taxon>Craniata</taxon>
        <taxon>Vertebrata</taxon>
        <taxon>Euteleostomi</taxon>
        <taxon>Actinopterygii</taxon>
        <taxon>Neopterygii</taxon>
        <taxon>Teleostei</taxon>
        <taxon>Ostariophysi</taxon>
        <taxon>Cypriniformes</taxon>
        <taxon>Danionidae</taxon>
        <taxon>Danioninae</taxon>
        <taxon>Danio</taxon>
    </lineage>
</organism>
<accession>Q5PRC7</accession>
<keyword id="KW-0227">DNA damage</keyword>
<keyword id="KW-0234">DNA repair</keyword>
<keyword id="KW-0238">DNA-binding</keyword>
<keyword id="KW-0539">Nucleus</keyword>
<keyword id="KW-1185">Reference proteome</keyword>
<feature type="chain" id="PRO_0000333957" description="SOSS complex subunit B2">
    <location>
        <begin position="1"/>
        <end position="211"/>
    </location>
</feature>
<feature type="DNA-binding region" description="OB">
    <location>
        <begin position="27"/>
        <end position="97"/>
    </location>
</feature>
<feature type="region of interest" description="Disordered" evidence="2">
    <location>
        <begin position="125"/>
        <end position="211"/>
    </location>
</feature>
<feature type="compositionally biased region" description="Polar residues" evidence="2">
    <location>
        <begin position="136"/>
        <end position="157"/>
    </location>
</feature>
<feature type="compositionally biased region" description="Pro residues" evidence="2">
    <location>
        <begin position="179"/>
        <end position="195"/>
    </location>
</feature>
<gene>
    <name type="primary">nabp1</name>
    <name type="synonym">obfc2a</name>
    <name type="synonym">ssb2</name>
    <name type="ORF">zgc:101644</name>
</gene>
<protein>
    <recommendedName>
        <fullName>SOSS complex subunit B2</fullName>
    </recommendedName>
    <alternativeName>
        <fullName>Nucleic acid-binding protein 1</fullName>
    </alternativeName>
    <alternativeName>
        <fullName>Oligonucleotide/oligosaccharide-binding fold-containing protein 2A</fullName>
    </alternativeName>
    <alternativeName>
        <fullName>Sensor of single-strand DNA complex subunit B2</fullName>
    </alternativeName>
    <alternativeName>
        <fullName>Sensor of ssDNA subunit B2</fullName>
        <shortName>SOSS-B2</shortName>
    </alternativeName>
    <alternativeName>
        <fullName>Single-stranded DNA-binding protein 2</fullName>
    </alternativeName>
</protein>
<proteinExistence type="evidence at transcript level"/>
<sequence length="211" mass="22438">MSNISNEAVILIKDVKPGSKNLNIVFIVLEIGRVTKTKDGHEVRSCRVADKSGSIAISVWDELGSLIQPGDIIRLTRGYASIWKGCLTLYTGRGGDLQKIGEFCMVYSEVPNFSEPNPELLAQANQQNKTSKEQRGNSPPNQNAGNGTVPVFSNNNAAPVPRDPNFGASGRPNGRAPGNGPPPVTAGGTPAPPKPTVSISNGRDPRRASKR</sequence>
<name>SOSB2_DANRE</name>